<protein>
    <recommendedName>
        <fullName evidence="1">Translation initiation factor IF-1</fullName>
    </recommendedName>
</protein>
<dbReference type="EMBL" id="CR936503">
    <property type="protein sequence ID" value="CAI56051.1"/>
    <property type="molecule type" value="Genomic_DNA"/>
</dbReference>
<dbReference type="RefSeq" id="WP_004270190.1">
    <property type="nucleotide sequence ID" value="NC_007576.1"/>
</dbReference>
<dbReference type="SMR" id="Q38UT3"/>
<dbReference type="STRING" id="314315.LCA_1743"/>
<dbReference type="GeneID" id="57132659"/>
<dbReference type="KEGG" id="lsa:LCA_1743"/>
<dbReference type="eggNOG" id="COG0361">
    <property type="taxonomic scope" value="Bacteria"/>
</dbReference>
<dbReference type="HOGENOM" id="CLU_151267_1_0_9"/>
<dbReference type="OrthoDB" id="9803250at2"/>
<dbReference type="Proteomes" id="UP000002707">
    <property type="component" value="Chromosome"/>
</dbReference>
<dbReference type="GO" id="GO:0005829">
    <property type="term" value="C:cytosol"/>
    <property type="evidence" value="ECO:0007669"/>
    <property type="project" value="TreeGrafter"/>
</dbReference>
<dbReference type="GO" id="GO:0043022">
    <property type="term" value="F:ribosome binding"/>
    <property type="evidence" value="ECO:0007669"/>
    <property type="project" value="UniProtKB-UniRule"/>
</dbReference>
<dbReference type="GO" id="GO:0019843">
    <property type="term" value="F:rRNA binding"/>
    <property type="evidence" value="ECO:0007669"/>
    <property type="project" value="UniProtKB-UniRule"/>
</dbReference>
<dbReference type="GO" id="GO:0003743">
    <property type="term" value="F:translation initiation factor activity"/>
    <property type="evidence" value="ECO:0007669"/>
    <property type="project" value="UniProtKB-UniRule"/>
</dbReference>
<dbReference type="CDD" id="cd04451">
    <property type="entry name" value="S1_IF1"/>
    <property type="match status" value="1"/>
</dbReference>
<dbReference type="FunFam" id="2.40.50.140:FF:000002">
    <property type="entry name" value="Translation initiation factor IF-1"/>
    <property type="match status" value="1"/>
</dbReference>
<dbReference type="Gene3D" id="2.40.50.140">
    <property type="entry name" value="Nucleic acid-binding proteins"/>
    <property type="match status" value="1"/>
</dbReference>
<dbReference type="HAMAP" id="MF_00075">
    <property type="entry name" value="IF_1"/>
    <property type="match status" value="1"/>
</dbReference>
<dbReference type="InterPro" id="IPR012340">
    <property type="entry name" value="NA-bd_OB-fold"/>
</dbReference>
<dbReference type="InterPro" id="IPR006196">
    <property type="entry name" value="RNA-binding_domain_S1_IF1"/>
</dbReference>
<dbReference type="InterPro" id="IPR003029">
    <property type="entry name" value="S1_domain"/>
</dbReference>
<dbReference type="InterPro" id="IPR004368">
    <property type="entry name" value="TIF_IF1"/>
</dbReference>
<dbReference type="NCBIfam" id="TIGR00008">
    <property type="entry name" value="infA"/>
    <property type="match status" value="1"/>
</dbReference>
<dbReference type="PANTHER" id="PTHR33370">
    <property type="entry name" value="TRANSLATION INITIATION FACTOR IF-1, CHLOROPLASTIC"/>
    <property type="match status" value="1"/>
</dbReference>
<dbReference type="PANTHER" id="PTHR33370:SF1">
    <property type="entry name" value="TRANSLATION INITIATION FACTOR IF-1, CHLOROPLASTIC"/>
    <property type="match status" value="1"/>
</dbReference>
<dbReference type="Pfam" id="PF01176">
    <property type="entry name" value="eIF-1a"/>
    <property type="match status" value="1"/>
</dbReference>
<dbReference type="SMART" id="SM00316">
    <property type="entry name" value="S1"/>
    <property type="match status" value="1"/>
</dbReference>
<dbReference type="SUPFAM" id="SSF50249">
    <property type="entry name" value="Nucleic acid-binding proteins"/>
    <property type="match status" value="1"/>
</dbReference>
<dbReference type="PROSITE" id="PS50832">
    <property type="entry name" value="S1_IF1_TYPE"/>
    <property type="match status" value="1"/>
</dbReference>
<reference key="1">
    <citation type="journal article" date="2005" name="Nat. Biotechnol.">
        <title>The complete genome sequence of the meat-borne lactic acid bacterium Lactobacillus sakei 23K.</title>
        <authorList>
            <person name="Chaillou S."/>
            <person name="Champomier-Verges M.-C."/>
            <person name="Cornet M."/>
            <person name="Crutz-Le Coq A.-M."/>
            <person name="Dudez A.-M."/>
            <person name="Martin V."/>
            <person name="Beaufils S."/>
            <person name="Darbon-Rongere E."/>
            <person name="Bossy R."/>
            <person name="Loux V."/>
            <person name="Zagorec M."/>
        </authorList>
    </citation>
    <scope>NUCLEOTIDE SEQUENCE [LARGE SCALE GENOMIC DNA]</scope>
    <source>
        <strain>23K</strain>
    </source>
</reference>
<organism>
    <name type="scientific">Latilactobacillus sakei subsp. sakei (strain 23K)</name>
    <name type="common">Lactobacillus sakei subsp. sakei</name>
    <dbReference type="NCBI Taxonomy" id="314315"/>
    <lineage>
        <taxon>Bacteria</taxon>
        <taxon>Bacillati</taxon>
        <taxon>Bacillota</taxon>
        <taxon>Bacilli</taxon>
        <taxon>Lactobacillales</taxon>
        <taxon>Lactobacillaceae</taxon>
        <taxon>Latilactobacillus</taxon>
    </lineage>
</organism>
<evidence type="ECO:0000255" key="1">
    <source>
        <dbReference type="HAMAP-Rule" id="MF_00075"/>
    </source>
</evidence>
<feature type="chain" id="PRO_0000263814" description="Translation initiation factor IF-1">
    <location>
        <begin position="1"/>
        <end position="72"/>
    </location>
</feature>
<feature type="domain" description="S1-like" evidence="1">
    <location>
        <begin position="1"/>
        <end position="72"/>
    </location>
</feature>
<comment type="function">
    <text evidence="1">One of the essential components for the initiation of protein synthesis. Stabilizes the binding of IF-2 and IF-3 on the 30S subunit to which N-formylmethionyl-tRNA(fMet) subsequently binds. Helps modulate mRNA selection, yielding the 30S pre-initiation complex (PIC). Upon addition of the 50S ribosomal subunit IF-1, IF-2 and IF-3 are released leaving the mature 70S translation initiation complex.</text>
</comment>
<comment type="subunit">
    <text evidence="1">Component of the 30S ribosomal translation pre-initiation complex which assembles on the 30S ribosome in the order IF-2 and IF-3, IF-1 and N-formylmethionyl-tRNA(fMet); mRNA recruitment can occur at any time during PIC assembly.</text>
</comment>
<comment type="subcellular location">
    <subcellularLocation>
        <location evidence="1">Cytoplasm</location>
    </subcellularLocation>
</comment>
<comment type="similarity">
    <text evidence="1">Belongs to the IF-1 family.</text>
</comment>
<gene>
    <name evidence="1" type="primary">infA</name>
    <name type="ordered locus">LCA_1743</name>
</gene>
<name>IF1_LATSS</name>
<keyword id="KW-0963">Cytoplasm</keyword>
<keyword id="KW-0396">Initiation factor</keyword>
<keyword id="KW-0648">Protein biosynthesis</keyword>
<keyword id="KW-1185">Reference proteome</keyword>
<keyword id="KW-0694">RNA-binding</keyword>
<keyword id="KW-0699">rRNA-binding</keyword>
<sequence>MAKDDVIEIEGKVTDTLPNAMFKVELENGAVILAHVSGKIRKNYIKILPGDRVTVELSPYDLTKGRITYRFK</sequence>
<proteinExistence type="inferred from homology"/>
<accession>Q38UT3</accession>